<organism>
    <name type="scientific">Leuconostoc mesenteroides subsp. mesenteroides (strain ATCC 8293 / DSM 20343 / BCRC 11652 / CCM 1803 / JCM 6124 / NCDO 523 / NBRC 100496 / NCIMB 8023 / NCTC 12954 / NRRL B-1118 / 37Y)</name>
    <dbReference type="NCBI Taxonomy" id="203120"/>
    <lineage>
        <taxon>Bacteria</taxon>
        <taxon>Bacillati</taxon>
        <taxon>Bacillota</taxon>
        <taxon>Bacilli</taxon>
        <taxon>Lactobacillales</taxon>
        <taxon>Lactobacillaceae</taxon>
        <taxon>Leuconostoc</taxon>
    </lineage>
</organism>
<proteinExistence type="inferred from homology"/>
<name>HIS6_LEUMM</name>
<feature type="chain" id="PRO_0000319459" description="Imidazole glycerol phosphate synthase subunit HisF">
    <location>
        <begin position="1"/>
        <end position="254"/>
    </location>
</feature>
<feature type="active site" evidence="1">
    <location>
        <position position="12"/>
    </location>
</feature>
<feature type="active site" evidence="1">
    <location>
        <position position="131"/>
    </location>
</feature>
<gene>
    <name evidence="1" type="primary">hisF</name>
    <name type="ordered locus">LEUM_1550</name>
</gene>
<evidence type="ECO:0000255" key="1">
    <source>
        <dbReference type="HAMAP-Rule" id="MF_01013"/>
    </source>
</evidence>
<comment type="function">
    <text evidence="1">IGPS catalyzes the conversion of PRFAR and glutamine to IGP, AICAR and glutamate. The HisF subunit catalyzes the cyclization activity that produces IGP and AICAR from PRFAR using the ammonia provided by the HisH subunit.</text>
</comment>
<comment type="catalytic activity">
    <reaction evidence="1">
        <text>5-[(5-phospho-1-deoxy-D-ribulos-1-ylimino)methylamino]-1-(5-phospho-beta-D-ribosyl)imidazole-4-carboxamide + L-glutamine = D-erythro-1-(imidazol-4-yl)glycerol 3-phosphate + 5-amino-1-(5-phospho-beta-D-ribosyl)imidazole-4-carboxamide + L-glutamate + H(+)</text>
        <dbReference type="Rhea" id="RHEA:24793"/>
        <dbReference type="ChEBI" id="CHEBI:15378"/>
        <dbReference type="ChEBI" id="CHEBI:29985"/>
        <dbReference type="ChEBI" id="CHEBI:58278"/>
        <dbReference type="ChEBI" id="CHEBI:58359"/>
        <dbReference type="ChEBI" id="CHEBI:58475"/>
        <dbReference type="ChEBI" id="CHEBI:58525"/>
        <dbReference type="EC" id="4.3.2.10"/>
    </reaction>
</comment>
<comment type="pathway">
    <text evidence="1">Amino-acid biosynthesis; L-histidine biosynthesis; L-histidine from 5-phospho-alpha-D-ribose 1-diphosphate: step 5/9.</text>
</comment>
<comment type="subunit">
    <text evidence="1">Heterodimer of HisH and HisF.</text>
</comment>
<comment type="subcellular location">
    <subcellularLocation>
        <location evidence="1">Cytoplasm</location>
    </subcellularLocation>
</comment>
<comment type="similarity">
    <text evidence="1">Belongs to the HisA/HisF family.</text>
</comment>
<keyword id="KW-0028">Amino-acid biosynthesis</keyword>
<keyword id="KW-0963">Cytoplasm</keyword>
<keyword id="KW-0368">Histidine biosynthesis</keyword>
<keyword id="KW-0456">Lyase</keyword>
<keyword id="KW-1185">Reference proteome</keyword>
<protein>
    <recommendedName>
        <fullName evidence="1">Imidazole glycerol phosphate synthase subunit HisF</fullName>
        <ecNumber evidence="1">4.3.2.10</ecNumber>
    </recommendedName>
    <alternativeName>
        <fullName evidence="1">IGP synthase cyclase subunit</fullName>
    </alternativeName>
    <alternativeName>
        <fullName evidence="1">IGP synthase subunit HisF</fullName>
    </alternativeName>
    <alternativeName>
        <fullName evidence="1">ImGP synthase subunit HisF</fullName>
        <shortName evidence="1">IGPS subunit HisF</shortName>
    </alternativeName>
</protein>
<dbReference type="EC" id="4.3.2.10" evidence="1"/>
<dbReference type="EMBL" id="CP000414">
    <property type="protein sequence ID" value="ABJ62642.1"/>
    <property type="molecule type" value="Genomic_DNA"/>
</dbReference>
<dbReference type="RefSeq" id="WP_011680215.1">
    <property type="nucleotide sequence ID" value="NC_008531.1"/>
</dbReference>
<dbReference type="SMR" id="Q03VY0"/>
<dbReference type="EnsemblBacteria" id="ABJ62642">
    <property type="protein sequence ID" value="ABJ62642"/>
    <property type="gene ID" value="LEUM_1550"/>
</dbReference>
<dbReference type="GeneID" id="29577109"/>
<dbReference type="KEGG" id="lme:LEUM_1550"/>
<dbReference type="eggNOG" id="COG0107">
    <property type="taxonomic scope" value="Bacteria"/>
</dbReference>
<dbReference type="HOGENOM" id="CLU_048577_4_0_9"/>
<dbReference type="UniPathway" id="UPA00031">
    <property type="reaction ID" value="UER00010"/>
</dbReference>
<dbReference type="Proteomes" id="UP000000362">
    <property type="component" value="Chromosome"/>
</dbReference>
<dbReference type="GO" id="GO:0005737">
    <property type="term" value="C:cytoplasm"/>
    <property type="evidence" value="ECO:0007669"/>
    <property type="project" value="UniProtKB-SubCell"/>
</dbReference>
<dbReference type="GO" id="GO:0000107">
    <property type="term" value="F:imidazoleglycerol-phosphate synthase activity"/>
    <property type="evidence" value="ECO:0007669"/>
    <property type="project" value="UniProtKB-UniRule"/>
</dbReference>
<dbReference type="GO" id="GO:0016829">
    <property type="term" value="F:lyase activity"/>
    <property type="evidence" value="ECO:0007669"/>
    <property type="project" value="UniProtKB-KW"/>
</dbReference>
<dbReference type="GO" id="GO:0000105">
    <property type="term" value="P:L-histidine biosynthetic process"/>
    <property type="evidence" value="ECO:0007669"/>
    <property type="project" value="UniProtKB-UniRule"/>
</dbReference>
<dbReference type="CDD" id="cd04731">
    <property type="entry name" value="HisF"/>
    <property type="match status" value="1"/>
</dbReference>
<dbReference type="FunFam" id="3.20.20.70:FF:000006">
    <property type="entry name" value="Imidazole glycerol phosphate synthase subunit HisF"/>
    <property type="match status" value="1"/>
</dbReference>
<dbReference type="Gene3D" id="3.20.20.70">
    <property type="entry name" value="Aldolase class I"/>
    <property type="match status" value="1"/>
</dbReference>
<dbReference type="HAMAP" id="MF_01013">
    <property type="entry name" value="HisF"/>
    <property type="match status" value="1"/>
</dbReference>
<dbReference type="InterPro" id="IPR013785">
    <property type="entry name" value="Aldolase_TIM"/>
</dbReference>
<dbReference type="InterPro" id="IPR006062">
    <property type="entry name" value="His_biosynth"/>
</dbReference>
<dbReference type="InterPro" id="IPR004651">
    <property type="entry name" value="HisF"/>
</dbReference>
<dbReference type="InterPro" id="IPR050064">
    <property type="entry name" value="IGPS_HisA/HisF"/>
</dbReference>
<dbReference type="InterPro" id="IPR011060">
    <property type="entry name" value="RibuloseP-bd_barrel"/>
</dbReference>
<dbReference type="NCBIfam" id="TIGR00735">
    <property type="entry name" value="hisF"/>
    <property type="match status" value="1"/>
</dbReference>
<dbReference type="PANTHER" id="PTHR21235:SF2">
    <property type="entry name" value="IMIDAZOLE GLYCEROL PHOSPHATE SYNTHASE HISHF"/>
    <property type="match status" value="1"/>
</dbReference>
<dbReference type="PANTHER" id="PTHR21235">
    <property type="entry name" value="IMIDAZOLE GLYCEROL PHOSPHATE SYNTHASE SUBUNIT HISF/H IGP SYNTHASE SUBUNIT HISF/H"/>
    <property type="match status" value="1"/>
</dbReference>
<dbReference type="Pfam" id="PF00977">
    <property type="entry name" value="His_biosynth"/>
    <property type="match status" value="1"/>
</dbReference>
<dbReference type="SUPFAM" id="SSF51366">
    <property type="entry name" value="Ribulose-phoshate binding barrel"/>
    <property type="match status" value="1"/>
</dbReference>
<sequence>MTLAKRIVPALDIKNGRVVKGVNFVNLREVGDPVESAKAYQAAGADELVFLDITATLEERDTIMSVVDAVSREVFIPLTVGGGIRTTEDMGRLIKAGADKIFVNSEAVKNPALITDGAKIFGSQAIVGAIDAKWDESAGIYRVYVSGGSKPTSLDAIEWAFELVARGAGELLVTSMDADGTKKGYDIQLYDQLADAVNVPVVASGGAGSTQDFVNLFEKTKIDAALAASVFHFGEIKIPNLKRTLKDDGVEIRI</sequence>
<accession>Q03VY0</accession>
<reference key="1">
    <citation type="journal article" date="2006" name="Proc. Natl. Acad. Sci. U.S.A.">
        <title>Comparative genomics of the lactic acid bacteria.</title>
        <authorList>
            <person name="Makarova K.S."/>
            <person name="Slesarev A."/>
            <person name="Wolf Y.I."/>
            <person name="Sorokin A."/>
            <person name="Mirkin B."/>
            <person name="Koonin E.V."/>
            <person name="Pavlov A."/>
            <person name="Pavlova N."/>
            <person name="Karamychev V."/>
            <person name="Polouchine N."/>
            <person name="Shakhova V."/>
            <person name="Grigoriev I."/>
            <person name="Lou Y."/>
            <person name="Rohksar D."/>
            <person name="Lucas S."/>
            <person name="Huang K."/>
            <person name="Goodstein D.M."/>
            <person name="Hawkins T."/>
            <person name="Plengvidhya V."/>
            <person name="Welker D."/>
            <person name="Hughes J."/>
            <person name="Goh Y."/>
            <person name="Benson A."/>
            <person name="Baldwin K."/>
            <person name="Lee J.-H."/>
            <person name="Diaz-Muniz I."/>
            <person name="Dosti B."/>
            <person name="Smeianov V."/>
            <person name="Wechter W."/>
            <person name="Barabote R."/>
            <person name="Lorca G."/>
            <person name="Altermann E."/>
            <person name="Barrangou R."/>
            <person name="Ganesan B."/>
            <person name="Xie Y."/>
            <person name="Rawsthorne H."/>
            <person name="Tamir D."/>
            <person name="Parker C."/>
            <person name="Breidt F."/>
            <person name="Broadbent J.R."/>
            <person name="Hutkins R."/>
            <person name="O'Sullivan D."/>
            <person name="Steele J."/>
            <person name="Unlu G."/>
            <person name="Saier M.H. Jr."/>
            <person name="Klaenhammer T."/>
            <person name="Richardson P."/>
            <person name="Kozyavkin S."/>
            <person name="Weimer B.C."/>
            <person name="Mills D.A."/>
        </authorList>
    </citation>
    <scope>NUCLEOTIDE SEQUENCE [LARGE SCALE GENOMIC DNA]</scope>
    <source>
        <strain>ATCC 8293 / DSM 20343 / BCRC 11652 / CCM 1803 / JCM 6124 / NCDO 523 / NBRC 100496 / NCIMB 8023 / NCTC 12954 / NRRL B-1118 / 37Y</strain>
    </source>
</reference>